<reference key="1">
    <citation type="journal article" date="2008" name="Proc. Natl. Acad. Sci. U.S.A.">
        <title>Niche adaptation and genome expansion in the chlorophyll d-producing cyanobacterium Acaryochloris marina.</title>
        <authorList>
            <person name="Swingley W.D."/>
            <person name="Chen M."/>
            <person name="Cheung P.C."/>
            <person name="Conrad A.L."/>
            <person name="Dejesa L.C."/>
            <person name="Hao J."/>
            <person name="Honchak B.M."/>
            <person name="Karbach L.E."/>
            <person name="Kurdoglu A."/>
            <person name="Lahiri S."/>
            <person name="Mastrian S.D."/>
            <person name="Miyashita H."/>
            <person name="Page L."/>
            <person name="Ramakrishna P."/>
            <person name="Satoh S."/>
            <person name="Sattley W.M."/>
            <person name="Shimada Y."/>
            <person name="Taylor H.L."/>
            <person name="Tomo T."/>
            <person name="Tsuchiya T."/>
            <person name="Wang Z.T."/>
            <person name="Raymond J."/>
            <person name="Mimuro M."/>
            <person name="Blankenship R.E."/>
            <person name="Touchman J.W."/>
        </authorList>
    </citation>
    <scope>NUCLEOTIDE SEQUENCE [LARGE SCALE GENOMIC DNA]</scope>
    <source>
        <strain>MBIC 11017</strain>
    </source>
</reference>
<comment type="function">
    <text evidence="1">Associates with the EF-Tu.GDP complex and induces the exchange of GDP to GTP. It remains bound to the aminoacyl-tRNA.EF-Tu.GTP complex up to the GTP hydrolysis stage on the ribosome.</text>
</comment>
<comment type="subcellular location">
    <subcellularLocation>
        <location evidence="1">Cytoplasm</location>
    </subcellularLocation>
</comment>
<comment type="similarity">
    <text evidence="1">Belongs to the EF-Ts family.</text>
</comment>
<sequence>MAAISAKDVKELRDKTGAGMMDCKKALQENDGDQEKAIAYLRKKGLSQAGKKSGRVTAEGLVDSYIHFGGQIGVLVEVNCETDFVARNEAFKELVQDIAKQIAACPNVQYVDTDEIPQDFVEKEKAVAMGSDALKGKPDNIKEKIVQGKLDKTLKELCLLHQPYIKDQSITVQELLQQAISKLGENMKVRRFTRFVLGEGIDKVESNLAEEVAAQTKPKAEEKPAAKKATSKKKKGKKK</sequence>
<protein>
    <recommendedName>
        <fullName evidence="1">Elongation factor Ts</fullName>
        <shortName evidence="1">EF-Ts</shortName>
    </recommendedName>
</protein>
<organism>
    <name type="scientific">Acaryochloris marina (strain MBIC 11017)</name>
    <dbReference type="NCBI Taxonomy" id="329726"/>
    <lineage>
        <taxon>Bacteria</taxon>
        <taxon>Bacillati</taxon>
        <taxon>Cyanobacteriota</taxon>
        <taxon>Cyanophyceae</taxon>
        <taxon>Acaryochloridales</taxon>
        <taxon>Acaryochloridaceae</taxon>
        <taxon>Acaryochloris</taxon>
    </lineage>
</organism>
<gene>
    <name evidence="1" type="primary">tsf</name>
    <name type="ordered locus">AM1_3427</name>
</gene>
<dbReference type="EMBL" id="CP000828">
    <property type="protein sequence ID" value="ABW28421.1"/>
    <property type="molecule type" value="Genomic_DNA"/>
</dbReference>
<dbReference type="RefSeq" id="WP_012163820.1">
    <property type="nucleotide sequence ID" value="NC_009925.1"/>
</dbReference>
<dbReference type="SMR" id="B0C074"/>
<dbReference type="STRING" id="329726.AM1_3427"/>
<dbReference type="KEGG" id="amr:AM1_3427"/>
<dbReference type="eggNOG" id="COG0264">
    <property type="taxonomic scope" value="Bacteria"/>
</dbReference>
<dbReference type="HOGENOM" id="CLU_047155_1_0_3"/>
<dbReference type="OrthoDB" id="9808348at2"/>
<dbReference type="Proteomes" id="UP000000268">
    <property type="component" value="Chromosome"/>
</dbReference>
<dbReference type="GO" id="GO:0005737">
    <property type="term" value="C:cytoplasm"/>
    <property type="evidence" value="ECO:0007669"/>
    <property type="project" value="UniProtKB-SubCell"/>
</dbReference>
<dbReference type="GO" id="GO:0003746">
    <property type="term" value="F:translation elongation factor activity"/>
    <property type="evidence" value="ECO:0007669"/>
    <property type="project" value="UniProtKB-UniRule"/>
</dbReference>
<dbReference type="CDD" id="cd14275">
    <property type="entry name" value="UBA_EF-Ts"/>
    <property type="match status" value="1"/>
</dbReference>
<dbReference type="FunFam" id="1.10.286.20:FF:000001">
    <property type="entry name" value="Elongation factor Ts"/>
    <property type="match status" value="1"/>
</dbReference>
<dbReference type="FunFam" id="1.10.8.10:FF:000001">
    <property type="entry name" value="Elongation factor Ts"/>
    <property type="match status" value="1"/>
</dbReference>
<dbReference type="Gene3D" id="1.10.286.20">
    <property type="match status" value="1"/>
</dbReference>
<dbReference type="Gene3D" id="1.10.8.10">
    <property type="entry name" value="DNA helicase RuvA subunit, C-terminal domain"/>
    <property type="match status" value="1"/>
</dbReference>
<dbReference type="Gene3D" id="3.30.479.20">
    <property type="entry name" value="Elongation factor Ts, dimerisation domain"/>
    <property type="match status" value="1"/>
</dbReference>
<dbReference type="HAMAP" id="MF_00050">
    <property type="entry name" value="EF_Ts"/>
    <property type="match status" value="1"/>
</dbReference>
<dbReference type="InterPro" id="IPR036402">
    <property type="entry name" value="EF-Ts_dimer_sf"/>
</dbReference>
<dbReference type="InterPro" id="IPR001816">
    <property type="entry name" value="Transl_elong_EFTs/EF1B"/>
</dbReference>
<dbReference type="InterPro" id="IPR014039">
    <property type="entry name" value="Transl_elong_EFTs/EF1B_dimer"/>
</dbReference>
<dbReference type="InterPro" id="IPR018101">
    <property type="entry name" value="Transl_elong_Ts_CS"/>
</dbReference>
<dbReference type="InterPro" id="IPR009060">
    <property type="entry name" value="UBA-like_sf"/>
</dbReference>
<dbReference type="NCBIfam" id="TIGR00116">
    <property type="entry name" value="tsf"/>
    <property type="match status" value="2"/>
</dbReference>
<dbReference type="PANTHER" id="PTHR11741">
    <property type="entry name" value="ELONGATION FACTOR TS"/>
    <property type="match status" value="1"/>
</dbReference>
<dbReference type="PANTHER" id="PTHR11741:SF0">
    <property type="entry name" value="ELONGATION FACTOR TS, MITOCHONDRIAL"/>
    <property type="match status" value="1"/>
</dbReference>
<dbReference type="Pfam" id="PF00889">
    <property type="entry name" value="EF_TS"/>
    <property type="match status" value="2"/>
</dbReference>
<dbReference type="SUPFAM" id="SSF54713">
    <property type="entry name" value="Elongation factor Ts (EF-Ts), dimerisation domain"/>
    <property type="match status" value="1"/>
</dbReference>
<dbReference type="SUPFAM" id="SSF46934">
    <property type="entry name" value="UBA-like"/>
    <property type="match status" value="1"/>
</dbReference>
<dbReference type="PROSITE" id="PS01126">
    <property type="entry name" value="EF_TS_1"/>
    <property type="match status" value="1"/>
</dbReference>
<dbReference type="PROSITE" id="PS01127">
    <property type="entry name" value="EF_TS_2"/>
    <property type="match status" value="1"/>
</dbReference>
<proteinExistence type="inferred from homology"/>
<feature type="chain" id="PRO_1000074850" description="Elongation factor Ts">
    <location>
        <begin position="1"/>
        <end position="239"/>
    </location>
</feature>
<feature type="region of interest" description="Involved in Mg(2+) ion dislocation from EF-Tu" evidence="1">
    <location>
        <begin position="82"/>
        <end position="85"/>
    </location>
</feature>
<feature type="region of interest" description="Disordered" evidence="2">
    <location>
        <begin position="213"/>
        <end position="239"/>
    </location>
</feature>
<feature type="compositionally biased region" description="Basic residues" evidence="2">
    <location>
        <begin position="229"/>
        <end position="239"/>
    </location>
</feature>
<accession>B0C074</accession>
<name>EFTS_ACAM1</name>
<evidence type="ECO:0000255" key="1">
    <source>
        <dbReference type="HAMAP-Rule" id="MF_00050"/>
    </source>
</evidence>
<evidence type="ECO:0000256" key="2">
    <source>
        <dbReference type="SAM" id="MobiDB-lite"/>
    </source>
</evidence>
<keyword id="KW-0963">Cytoplasm</keyword>
<keyword id="KW-0251">Elongation factor</keyword>
<keyword id="KW-0648">Protein biosynthesis</keyword>
<keyword id="KW-1185">Reference proteome</keyword>